<gene>
    <name evidence="1" type="primary">frdC</name>
    <name type="ordered locus">SSON_4338</name>
</gene>
<proteinExistence type="inferred from homology"/>
<reference key="1">
    <citation type="journal article" date="2005" name="Nucleic Acids Res.">
        <title>Genome dynamics and diversity of Shigella species, the etiologic agents of bacillary dysentery.</title>
        <authorList>
            <person name="Yang F."/>
            <person name="Yang J."/>
            <person name="Zhang X."/>
            <person name="Chen L."/>
            <person name="Jiang Y."/>
            <person name="Yan Y."/>
            <person name="Tang X."/>
            <person name="Wang J."/>
            <person name="Xiong Z."/>
            <person name="Dong J."/>
            <person name="Xue Y."/>
            <person name="Zhu Y."/>
            <person name="Xu X."/>
            <person name="Sun L."/>
            <person name="Chen S."/>
            <person name="Nie H."/>
            <person name="Peng J."/>
            <person name="Xu J."/>
            <person name="Wang Y."/>
            <person name="Yuan Z."/>
            <person name="Wen Y."/>
            <person name="Yao Z."/>
            <person name="Shen Y."/>
            <person name="Qiang B."/>
            <person name="Hou Y."/>
            <person name="Yu J."/>
            <person name="Jin Q."/>
        </authorList>
    </citation>
    <scope>NUCLEOTIDE SEQUENCE [LARGE SCALE GENOMIC DNA]</scope>
    <source>
        <strain>Ss046</strain>
    </source>
</reference>
<protein>
    <recommendedName>
        <fullName evidence="1">Fumarate reductase subunit C</fullName>
    </recommendedName>
    <alternativeName>
        <fullName evidence="1">Fumarate reductase 15 kDa hydrophobic protein</fullName>
    </alternativeName>
    <alternativeName>
        <fullName evidence="1">Quinol-fumarate reductase subunit C</fullName>
        <shortName evidence="1">QFR subunit C</shortName>
    </alternativeName>
</protein>
<sequence>MTTKRKPYVRPMTSTWWKKLPFYRFYMLREGTAVPAVWFSIELIFGLFALKNGPEAWAGFVDFLQNPVIVIINLITLAAALLHTKTWFELAPKAANIIVKDEKMGPEPIIKSLWAVTVVATIVILFVALYW</sequence>
<keyword id="KW-0997">Cell inner membrane</keyword>
<keyword id="KW-1003">Cell membrane</keyword>
<keyword id="KW-0472">Membrane</keyword>
<keyword id="KW-1185">Reference proteome</keyword>
<keyword id="KW-0812">Transmembrane</keyword>
<keyword id="KW-1133">Transmembrane helix</keyword>
<name>FRDC_SHISS</name>
<dbReference type="EMBL" id="CP000038">
    <property type="protein sequence ID" value="AAZ90826.1"/>
    <property type="molecule type" value="Genomic_DNA"/>
</dbReference>
<dbReference type="RefSeq" id="WP_000208757.1">
    <property type="nucleotide sequence ID" value="NC_007384.1"/>
</dbReference>
<dbReference type="SMR" id="Q3YUI6"/>
<dbReference type="GeneID" id="93777670"/>
<dbReference type="KEGG" id="ssn:SSON_4338"/>
<dbReference type="HOGENOM" id="CLU_156492_0_0_6"/>
<dbReference type="Proteomes" id="UP000002529">
    <property type="component" value="Chromosome"/>
</dbReference>
<dbReference type="GO" id="GO:0045283">
    <property type="term" value="C:fumarate reductase complex"/>
    <property type="evidence" value="ECO:0007669"/>
    <property type="project" value="UniProtKB-UniRule"/>
</dbReference>
<dbReference type="GO" id="GO:0005886">
    <property type="term" value="C:plasma membrane"/>
    <property type="evidence" value="ECO:0007669"/>
    <property type="project" value="UniProtKB-SubCell"/>
</dbReference>
<dbReference type="GO" id="GO:0000104">
    <property type="term" value="F:succinate dehydrogenase activity"/>
    <property type="evidence" value="ECO:0007669"/>
    <property type="project" value="UniProtKB-UniRule"/>
</dbReference>
<dbReference type="CDD" id="cd00546">
    <property type="entry name" value="QFR_TypeD_subunitC"/>
    <property type="match status" value="1"/>
</dbReference>
<dbReference type="FunFam" id="1.20.1300.10:FF:000003">
    <property type="entry name" value="Fumarate reductase subunit C"/>
    <property type="match status" value="1"/>
</dbReference>
<dbReference type="Gene3D" id="1.20.1300.10">
    <property type="entry name" value="Fumarate reductase/succinate dehydrogenase, transmembrane subunit"/>
    <property type="match status" value="1"/>
</dbReference>
<dbReference type="HAMAP" id="MF_00708">
    <property type="entry name" value="Fumarate_red_C"/>
    <property type="match status" value="1"/>
</dbReference>
<dbReference type="InterPro" id="IPR003510">
    <property type="entry name" value="Fumarate_red_C"/>
</dbReference>
<dbReference type="InterPro" id="IPR034804">
    <property type="entry name" value="SQR/QFR_C/D"/>
</dbReference>
<dbReference type="NCBIfam" id="NF003445">
    <property type="entry name" value="PRK04987.1"/>
    <property type="match status" value="1"/>
</dbReference>
<dbReference type="Pfam" id="PF02300">
    <property type="entry name" value="Fumarate_red_C"/>
    <property type="match status" value="1"/>
</dbReference>
<dbReference type="PIRSF" id="PIRSF000180">
    <property type="entry name" value="FrdC"/>
    <property type="match status" value="1"/>
</dbReference>
<dbReference type="SUPFAM" id="SSF81343">
    <property type="entry name" value="Fumarate reductase respiratory complex transmembrane subunits"/>
    <property type="match status" value="1"/>
</dbReference>
<comment type="function">
    <text evidence="1">Two distinct, membrane-bound, FAD-containing enzymes are responsible for the catalysis of fumarate and succinate interconversion; fumarate reductase is used in anaerobic growth, and succinate dehydrogenase is used in aerobic growth. Anchors the catalytic components of the fumarate reductase complex to the cell inner membrane, binds quinones.</text>
</comment>
<comment type="subunit">
    <text evidence="1">Part of an enzyme complex containing four subunits: a flavoprotein (FrdA), an iron-sulfur protein (FrdB), and two hydrophobic anchor proteins (FrdC and FrdD).</text>
</comment>
<comment type="subcellular location">
    <subcellularLocation>
        <location evidence="1">Cell inner membrane</location>
        <topology evidence="1">Multi-pass membrane protein</topology>
    </subcellularLocation>
</comment>
<comment type="similarity">
    <text evidence="1">Belongs to the FrdC family.</text>
</comment>
<organism>
    <name type="scientific">Shigella sonnei (strain Ss046)</name>
    <dbReference type="NCBI Taxonomy" id="300269"/>
    <lineage>
        <taxon>Bacteria</taxon>
        <taxon>Pseudomonadati</taxon>
        <taxon>Pseudomonadota</taxon>
        <taxon>Gammaproteobacteria</taxon>
        <taxon>Enterobacterales</taxon>
        <taxon>Enterobacteriaceae</taxon>
        <taxon>Shigella</taxon>
    </lineage>
</organism>
<evidence type="ECO:0000255" key="1">
    <source>
        <dbReference type="HAMAP-Rule" id="MF_00708"/>
    </source>
</evidence>
<accession>Q3YUI6</accession>
<feature type="chain" id="PRO_1000045535" description="Fumarate reductase subunit C">
    <location>
        <begin position="1"/>
        <end position="131"/>
    </location>
</feature>
<feature type="transmembrane region" description="Helical" evidence="1">
    <location>
        <begin position="30"/>
        <end position="50"/>
    </location>
</feature>
<feature type="transmembrane region" description="Helical" evidence="1">
    <location>
        <begin position="63"/>
        <end position="83"/>
    </location>
</feature>
<feature type="transmembrane region" description="Helical" evidence="1">
    <location>
        <begin position="109"/>
        <end position="129"/>
    </location>
</feature>